<proteinExistence type="inferred from homology"/>
<organism>
    <name type="scientific">Phaseolus vulgaris</name>
    <name type="common">Kidney bean</name>
    <name type="synonym">French bean</name>
    <dbReference type="NCBI Taxonomy" id="3885"/>
    <lineage>
        <taxon>Eukaryota</taxon>
        <taxon>Viridiplantae</taxon>
        <taxon>Streptophyta</taxon>
        <taxon>Embryophyta</taxon>
        <taxon>Tracheophyta</taxon>
        <taxon>Spermatophyta</taxon>
        <taxon>Magnoliopsida</taxon>
        <taxon>eudicotyledons</taxon>
        <taxon>Gunneridae</taxon>
        <taxon>Pentapetalae</taxon>
        <taxon>rosids</taxon>
        <taxon>fabids</taxon>
        <taxon>Fabales</taxon>
        <taxon>Fabaceae</taxon>
        <taxon>Papilionoideae</taxon>
        <taxon>50 kb inversion clade</taxon>
        <taxon>NPAAA clade</taxon>
        <taxon>indigoferoid/millettioid clade</taxon>
        <taxon>Phaseoleae</taxon>
        <taxon>Phaseolus</taxon>
    </lineage>
</organism>
<protein>
    <recommendedName>
        <fullName evidence="1">DNA-directed RNA polymerase subunit beta''</fullName>
        <ecNumber evidence="1">2.7.7.6</ecNumber>
    </recommendedName>
    <alternativeName>
        <fullName evidence="1">PEP</fullName>
    </alternativeName>
    <alternativeName>
        <fullName evidence="1">Plastid-encoded RNA polymerase subunit beta''</fullName>
        <shortName evidence="1">RNA polymerase subunit beta''</shortName>
    </alternativeName>
</protein>
<sequence length="1366" mass="156371">MAERTNLMFHNKVIGGTAIKRLISRLIDHFGMAYTSHILDQVKTLGFRQATATSISLGIDDLLTIPSKGWLVRDAEHQNLILEKQHHYGNVHAVEKLRQSIEIWYATSEYFRQEMNPNFRMTDPFNPVHIMSFSGARGNASQVHQLVGMRGLMSDPQGQMIDLPIQSNLREGLSLTEYIISCYGARKGVVDTAVRTSDAGYLTRRLVEVVQHIVIRRTDCGTIRGISVNTQNEMMPESTWTQTLIGRVLADDIYRGSRCIAVRNQDIGIGLFNQFKTFQTQPISIRTPFTCRNTSWICRLCYGQSPTQGHLVELGEAVGIIAGQSIGEPGTQLTLRTFHTGGVFTGGTAEQVRAPYNGKIKFNEDLVHPTRTRHGHPAFLCYIDLYVSIENGDIIHNVTIPPKSFLLVQNNQYVKSEQVIAEILAGTYTFNFKEKVRKHVYSDLEGEMHWSTNVYHASEFKYSNVHILPKTSHLWILSGKSDRSGSVSFSTRKDQDQLNIHSLSTGERDICNHLASNNKIRHKLFHFNPSEKKERRISDYSIINQIICIDHCHFTHPAIFHDTTDLLAKRRRNRFIIPFQFQSIQERDKALMLASSISIEIPINGLFRRNSIFAYFDDPQYRTQSSGITKYRTIDINYILKKEDFVIEYPGVKEFKTKYQMKVDQFFFIPEEVYILPEFSSIMVRNNSIVEVDTPITVNIRSQVSGLVRLEKKKKKIQLKIFSGNIYFPGEMDKISRHSAMLIPPRTVKKNSKGSKKKMKNWIYAQWITITKKKYFVLVRPVILYEIADRIKLIKFFSQDMLQERDNLELQVINYILSGNGKSIRGISNTSIQLVRTCLVLNWDQDKKVSSIEKGHASFVELSINGLVRYFLKIALVKSHISYIRKRNDPSGSRFILDNESDWTNINPFFSMNSREKVQQSLSQNHGTIHMLLNRNDKCRSLIILSSSNCFQIRSFHDGKYYKEEMNPIQRDPLIPIKNSLGPLGIALQVANLDFYLLITHNQISINKNGQLDKLKETFQVFKYYLIDENERIYKPDISSNILLNPFYLNWHFFHHNSCEKKTFPIISLGQFICENVCIVQMKNAPHLKSGQILTVQMDSVGIRSANPYLATPGTTVHGHYGEILSEGDILVTFIYQKSRSGDITQGLPKVEQVLEVRSIDSISINLEKRVGTWNGRITRILGIPWGFFISAELTIAQSRISLVNQIQKVYRSQGVHIHNRHIEIIVRQITSKVLVSEDGMSNVFLPGELIGLLRAERAGRSLEESICYRVLLLGITKTSLNTQSFISEASFQETARVLSKAALRGRIDWLKGLKENVVLGGMMPVGTGFKRIIYRSKQRQYNKITSETKKRIDMIYQSNLGFKNS</sequence>
<reference key="1">
    <citation type="journal article" date="2007" name="BMC Genomics">
        <title>Rapid evolutionary change of common bean (Phaseolus vulgaris L) plastome, and the genomic diversification of legume chloroplasts.</title>
        <authorList>
            <person name="Guo X."/>
            <person name="Castillo-Ramirez S."/>
            <person name="Gonzalez V."/>
            <person name="Bustos P."/>
            <person name="Fernandez-Vazquez J.L."/>
            <person name="Santamaria R.I."/>
            <person name="Arellano J."/>
            <person name="Cevallos M.A."/>
            <person name="Davila G."/>
        </authorList>
    </citation>
    <scope>NUCLEOTIDE SEQUENCE [LARGE SCALE GENOMIC DNA]</scope>
    <source>
        <strain>cv. Negro Jamapa</strain>
    </source>
</reference>
<reference key="2">
    <citation type="submission" date="2007-10" db="EMBL/GenBank/DDBJ databases">
        <title>Complete nucleotide sequence of the plastid genome of the common bean, Phaseolus vulgaris.</title>
        <authorList>
            <person name="Moore M.J."/>
            <person name="Triplett E.W."/>
            <person name="Broughton W.J."/>
            <person name="Soltis P.S."/>
            <person name="Soltis D.E."/>
        </authorList>
    </citation>
    <scope>NUCLEOTIDE SEQUENCE [LARGE SCALE GENOMIC DNA]</scope>
</reference>
<feature type="chain" id="PRO_0000353580" description="DNA-directed RNA polymerase subunit beta''">
    <location>
        <begin position="1"/>
        <end position="1366"/>
    </location>
</feature>
<feature type="binding site" evidence="1">
    <location>
        <position position="220"/>
    </location>
    <ligand>
        <name>Zn(2+)</name>
        <dbReference type="ChEBI" id="CHEBI:29105"/>
    </ligand>
</feature>
<feature type="binding site" evidence="1">
    <location>
        <position position="291"/>
    </location>
    <ligand>
        <name>Zn(2+)</name>
        <dbReference type="ChEBI" id="CHEBI:29105"/>
    </ligand>
</feature>
<feature type="binding site" evidence="1">
    <location>
        <position position="298"/>
    </location>
    <ligand>
        <name>Zn(2+)</name>
        <dbReference type="ChEBI" id="CHEBI:29105"/>
    </ligand>
</feature>
<feature type="binding site" evidence="1">
    <location>
        <position position="301"/>
    </location>
    <ligand>
        <name>Zn(2+)</name>
        <dbReference type="ChEBI" id="CHEBI:29105"/>
    </ligand>
</feature>
<feature type="sequence conflict" description="In Ref. 2; ABW22780." evidence="2" ref="2">
    <original>NSKGS</original>
    <variation>IQKDQ</variation>
    <location>
        <begin position="751"/>
        <end position="755"/>
    </location>
</feature>
<feature type="sequence conflict" description="In Ref. 2; ABW22780." evidence="2" ref="2">
    <original>L</original>
    <variation>W</variation>
    <location>
        <position position="993"/>
    </location>
</feature>
<keyword id="KW-0150">Chloroplast</keyword>
<keyword id="KW-0240">DNA-directed RNA polymerase</keyword>
<keyword id="KW-0479">Metal-binding</keyword>
<keyword id="KW-0548">Nucleotidyltransferase</keyword>
<keyword id="KW-0934">Plastid</keyword>
<keyword id="KW-0804">Transcription</keyword>
<keyword id="KW-0808">Transferase</keyword>
<keyword id="KW-0862">Zinc</keyword>
<geneLocation type="chloroplast"/>
<accession>A4GGA7</accession>
<accession>A8W810</accession>
<dbReference type="EC" id="2.7.7.6" evidence="1"/>
<dbReference type="EMBL" id="DQ886273">
    <property type="protein sequence ID" value="ABH88088.1"/>
    <property type="molecule type" value="Genomic_DNA"/>
</dbReference>
<dbReference type="EMBL" id="EU196765">
    <property type="protein sequence ID" value="ABW22780.1"/>
    <property type="molecule type" value="Genomic_DNA"/>
</dbReference>
<dbReference type="RefSeq" id="YP_001122808.1">
    <property type="nucleotide sequence ID" value="NC_009259.1"/>
</dbReference>
<dbReference type="SMR" id="A4GGA7"/>
<dbReference type="GeneID" id="4961803"/>
<dbReference type="KEGG" id="pvu:4961803"/>
<dbReference type="GO" id="GO:0009507">
    <property type="term" value="C:chloroplast"/>
    <property type="evidence" value="ECO:0007669"/>
    <property type="project" value="UniProtKB-SubCell"/>
</dbReference>
<dbReference type="GO" id="GO:0000428">
    <property type="term" value="C:DNA-directed RNA polymerase complex"/>
    <property type="evidence" value="ECO:0007669"/>
    <property type="project" value="UniProtKB-KW"/>
</dbReference>
<dbReference type="GO" id="GO:0005739">
    <property type="term" value="C:mitochondrion"/>
    <property type="evidence" value="ECO:0007669"/>
    <property type="project" value="GOC"/>
</dbReference>
<dbReference type="GO" id="GO:0003677">
    <property type="term" value="F:DNA binding"/>
    <property type="evidence" value="ECO:0007669"/>
    <property type="project" value="UniProtKB-UniRule"/>
</dbReference>
<dbReference type="GO" id="GO:0003899">
    <property type="term" value="F:DNA-directed RNA polymerase activity"/>
    <property type="evidence" value="ECO:0007669"/>
    <property type="project" value="UniProtKB-UniRule"/>
</dbReference>
<dbReference type="GO" id="GO:0008270">
    <property type="term" value="F:zinc ion binding"/>
    <property type="evidence" value="ECO:0007669"/>
    <property type="project" value="UniProtKB-UniRule"/>
</dbReference>
<dbReference type="GO" id="GO:0006351">
    <property type="term" value="P:DNA-templated transcription"/>
    <property type="evidence" value="ECO:0007669"/>
    <property type="project" value="UniProtKB-UniRule"/>
</dbReference>
<dbReference type="CDD" id="cd02655">
    <property type="entry name" value="RNAP_beta'_C"/>
    <property type="match status" value="1"/>
</dbReference>
<dbReference type="FunFam" id="1.10.132.30:FF:000002">
    <property type="entry name" value="DNA-directed RNA polymerase subunit beta"/>
    <property type="match status" value="1"/>
</dbReference>
<dbReference type="Gene3D" id="1.10.132.30">
    <property type="match status" value="1"/>
</dbReference>
<dbReference type="Gene3D" id="1.10.150.390">
    <property type="match status" value="1"/>
</dbReference>
<dbReference type="Gene3D" id="1.10.1790.20">
    <property type="match status" value="1"/>
</dbReference>
<dbReference type="Gene3D" id="1.10.274.100">
    <property type="entry name" value="RNA polymerase Rpb1, domain 3"/>
    <property type="match status" value="1"/>
</dbReference>
<dbReference type="HAMAP" id="MF_01324">
    <property type="entry name" value="RNApol_bact_RpoC2"/>
    <property type="match status" value="1"/>
</dbReference>
<dbReference type="InterPro" id="IPR012756">
    <property type="entry name" value="DNA-dir_RpoC2_beta_pp"/>
</dbReference>
<dbReference type="InterPro" id="IPR050254">
    <property type="entry name" value="RNA_pol_beta''_euk"/>
</dbReference>
<dbReference type="InterPro" id="IPR042102">
    <property type="entry name" value="RNA_pol_Rpb1_3_sf"/>
</dbReference>
<dbReference type="InterPro" id="IPR007083">
    <property type="entry name" value="RNA_pol_Rpb1_4"/>
</dbReference>
<dbReference type="InterPro" id="IPR007081">
    <property type="entry name" value="RNA_pol_Rpb1_5"/>
</dbReference>
<dbReference type="InterPro" id="IPR038120">
    <property type="entry name" value="Rpb1_funnel_sf"/>
</dbReference>
<dbReference type="NCBIfam" id="TIGR02388">
    <property type="entry name" value="rpoC2_cyan"/>
    <property type="match status" value="1"/>
</dbReference>
<dbReference type="PANTHER" id="PTHR34995">
    <property type="entry name" value="DNA-DIRECTED RNA POLYMERASE SUBUNIT BETA"/>
    <property type="match status" value="1"/>
</dbReference>
<dbReference type="PANTHER" id="PTHR34995:SF1">
    <property type="entry name" value="DNA-DIRECTED RNA POLYMERASE SUBUNIT BETA"/>
    <property type="match status" value="1"/>
</dbReference>
<dbReference type="Pfam" id="PF05000">
    <property type="entry name" value="RNA_pol_Rpb1_4"/>
    <property type="match status" value="1"/>
</dbReference>
<dbReference type="Pfam" id="PF04998">
    <property type="entry name" value="RNA_pol_Rpb1_5"/>
    <property type="match status" value="2"/>
</dbReference>
<dbReference type="SUPFAM" id="SSF64484">
    <property type="entry name" value="beta and beta-prime subunits of DNA dependent RNA-polymerase"/>
    <property type="match status" value="1"/>
</dbReference>
<name>RPOC2_PHAVU</name>
<comment type="function">
    <text evidence="1">DNA-dependent RNA polymerase catalyzes the transcription of DNA into RNA using the four ribonucleoside triphosphates as substrates.</text>
</comment>
<comment type="catalytic activity">
    <reaction evidence="1">
        <text>RNA(n) + a ribonucleoside 5'-triphosphate = RNA(n+1) + diphosphate</text>
        <dbReference type="Rhea" id="RHEA:21248"/>
        <dbReference type="Rhea" id="RHEA-COMP:14527"/>
        <dbReference type="Rhea" id="RHEA-COMP:17342"/>
        <dbReference type="ChEBI" id="CHEBI:33019"/>
        <dbReference type="ChEBI" id="CHEBI:61557"/>
        <dbReference type="ChEBI" id="CHEBI:140395"/>
        <dbReference type="EC" id="2.7.7.6"/>
    </reaction>
</comment>
<comment type="cofactor">
    <cofactor evidence="1">
        <name>Zn(2+)</name>
        <dbReference type="ChEBI" id="CHEBI:29105"/>
    </cofactor>
    <text evidence="1">Binds 1 Zn(2+) ion per subunit.</text>
</comment>
<comment type="subunit">
    <text evidence="1">In plastids the minimal PEP RNA polymerase catalytic core is composed of four subunits: alpha, beta, beta', and beta''. When a (nuclear-encoded) sigma factor is associated with the core the holoenzyme is formed, which can initiate transcription.</text>
</comment>
<comment type="subcellular location">
    <subcellularLocation>
        <location evidence="1">Plastid</location>
        <location evidence="1">Chloroplast</location>
    </subcellularLocation>
</comment>
<comment type="similarity">
    <text evidence="1">Belongs to the RNA polymerase beta' chain family. RpoC2 subfamily.</text>
</comment>
<gene>
    <name evidence="1" type="primary">rpoC2</name>
</gene>
<evidence type="ECO:0000255" key="1">
    <source>
        <dbReference type="HAMAP-Rule" id="MF_01324"/>
    </source>
</evidence>
<evidence type="ECO:0000305" key="2"/>